<protein>
    <recommendedName>
        <fullName evidence="6">Potassium channel toxin kappa-KTx 5.1</fullName>
    </recommendedName>
    <alternativeName>
        <fullName evidence="6">HelaTx1</fullName>
    </alternativeName>
</protein>
<proteinExistence type="evidence at protein level"/>
<comment type="function">
    <text evidence="2 4 5">Weak blocker of potassium channels Kv1.1/KCNA1 (IC(50)=578.5 nM-9.9 uM) and Kv1.6/KCNA6 (~60% block at 30 uM of toxin) (PubMed:22305749, PubMed:26724500). Acts by binding to the pore and occluding it (PubMed:22305749). Has a voltage-dependent mode of action, which can be explained by a high content of basic residues causing repulsions at higher membrane voltages (PubMed:22305749). Shows a weak interaction with muscle-type nicotinic acetylcholine receptors (nAChR), since it inhibits alpha-bungarotoxin binding to muscle-type nAChR from T.californica (IC(50)=1.4 uM) (PubMed:31276191). This suggests it probably weakly inhibits muscle nAChR (PubMed:31276191). The mode of binding to potassium channels of this toxin differs from its homologs (including HefuTx1), since it lacks the key aromatic residue of the functional dyad. In contrast, its functionally important site is composed of a number of basic residues (PubMed:32172732).</text>
</comment>
<comment type="subcellular location">
    <subcellularLocation>
        <location evidence="2">Secreted</location>
    </subcellularLocation>
</comment>
<comment type="tissue specificity">
    <text evidence="8">Expressed by the venom gland.</text>
</comment>
<comment type="domain">
    <text evidence="5 8">Has the structural arrangement of two alpha-helices stabilized by disulfide bonds (CSalpha/alpha 2(S-S)).</text>
</comment>
<comment type="mass spectrometry" mass="2915.34" method="MALDI" evidence="2"/>
<comment type="mass spectrometry" mass="2915.4" method="MALDI" evidence="4"/>
<comment type="miscellaneous">
    <text evidence="2 4">Negative results: does not block or very poorly blocks Kv1.2/KCNA2, Kv1.3/KCNA3 (20%), Kv1.4/KCNA4 (13%), Kv1.5/KCNA5, Kv1.8/KCNA10, Kv2.1/KCNB1, Kv3.1/KCNC1, Kv4.2/KCND2, KCa2.3/KCNN3, KCa3.1/KCNN4 (PubMed:22305749). May not inhibit neuronal human alpha-7 nAChR, since it does not inhibit alpha-7 alpha-bungarotoxin binding (IC(50)=64 uM) (PubMed:31276191).</text>
</comment>
<comment type="similarity">
    <text evidence="7">Belongs to the short scorpion toxin superfamily. Potassium channel inhibitor kappa-KTx family. Kappa-KTx 5 subfamily.</text>
</comment>
<evidence type="ECO:0000255" key="1"/>
<evidence type="ECO:0000269" key="2">
    <source>
    </source>
</evidence>
<evidence type="ECO:0000269" key="3">
    <source>
    </source>
</evidence>
<evidence type="ECO:0000269" key="4">
    <source>
    </source>
</evidence>
<evidence type="ECO:0000269" key="5">
    <source>
    </source>
</evidence>
<evidence type="ECO:0000303" key="6">
    <source>
    </source>
</evidence>
<evidence type="ECO:0000305" key="7"/>
<evidence type="ECO:0000305" key="8">
    <source>
    </source>
</evidence>
<evidence type="ECO:0007744" key="9">
    <source>
        <dbReference type="PDB" id="2NDD"/>
    </source>
</evidence>
<evidence type="ECO:0007829" key="10">
    <source>
        <dbReference type="PDB" id="2NDD"/>
    </source>
</evidence>
<keyword id="KW-0002">3D-structure</keyword>
<keyword id="KW-0008">Acetylcholine receptor inhibiting toxin</keyword>
<keyword id="KW-0027">Amidation</keyword>
<keyword id="KW-0165">Cleavage on pair of basic residues</keyword>
<keyword id="KW-0903">Direct protein sequencing</keyword>
<keyword id="KW-1015">Disulfide bond</keyword>
<keyword id="KW-0872">Ion channel impairing toxin</keyword>
<keyword id="KW-0528">Neurotoxin</keyword>
<keyword id="KW-0629">Postsynaptic neurotoxin</keyword>
<keyword id="KW-0632">Potassium channel impairing toxin</keyword>
<keyword id="KW-0964">Secreted</keyword>
<keyword id="KW-0732">Signal</keyword>
<keyword id="KW-0800">Toxin</keyword>
<keyword id="KW-1220">Voltage-gated potassium channel impairing toxin</keyword>
<name>KKX51_HETLA</name>
<accession>P0DJ41</accession>
<reference key="1">
    <citation type="journal article" date="2012" name="Biochem. Pharmacol.">
        <title>Purification, molecular cloning and functional characterization of HelaTx1 (Heterometrus laoticus): the first member of a new kappa-KTX subfamily.</title>
        <authorList>
            <person name="Vandendriessche T."/>
            <person name="Kopljar I."/>
            <person name="Jenkins D.P."/>
            <person name="Diego-Garcia E."/>
            <person name="Abdel-Mottaleb Y."/>
            <person name="Vermassen E."/>
            <person name="Clynen E."/>
            <person name="Schoofs L."/>
            <person name="Wulff H."/>
            <person name="Snyders D."/>
            <person name="Tytgat J."/>
        </authorList>
    </citation>
    <scope>NUCLEOTIDE SEQUENCE [MRNA]</scope>
    <scope>PROTEIN SEQUENCE OF 46-70</scope>
    <scope>FUNCTION</scope>
    <scope>DISULFIDE BONDS</scope>
    <scope>AMIDATION AT HIS-70</scope>
    <scope>SYNTHESIS OF 46-70</scope>
    <scope>MASS SPECTROMETRY</scope>
    <scope>SUBCELLULAR LOCATION</scope>
    <scope>NOMENCLATURE</scope>
    <source>
        <tissue>Venom</tissue>
        <tissue>Venom gland</tissue>
    </source>
</reference>
<reference key="2">
    <citation type="journal article" date="2016" name="Toxicon">
        <title>Effects of deletion and insertion of amino acids on the activity of HelaTx1, a scorpion toxin on potassium channels.</title>
        <authorList>
            <person name="Peigneur S."/>
            <person name="Esaki N."/>
            <person name="Yamaguchi Y."/>
            <person name="Tytgat J."/>
            <person name="Sato K."/>
        </authorList>
    </citation>
    <scope>FUNCTION</scope>
    <scope>SYNTHESIS OF 46-64</scope>
    <scope>MUTAGENESIS OF SER-46; ARG-55 AND 65-ASN--HIS-70</scope>
</reference>
<reference key="3">
    <citation type="journal article" date="2019" name="FEBS Lett.">
        <title>Scorpion toxins interact with nicotinic acetylcholine receptors.</title>
        <authorList>
            <person name="Kasheverov I.E."/>
            <person name="Oparin P.B."/>
            <person name="Zhmak M.N."/>
            <person name="Egorova N.S."/>
            <person name="Ivanov I.A."/>
            <person name="Gigolaev A.M."/>
            <person name="Nekrasova O.V."/>
            <person name="Serebryakova M.V."/>
            <person name="Kudryavtsev D.S."/>
            <person name="Prokopev N.A."/>
            <person name="Hoang A.N."/>
            <person name="Tsetlin V.I."/>
            <person name="Vassilevski A.A."/>
            <person name="Utkin Y.N."/>
        </authorList>
    </citation>
    <scope>FUNCTION</scope>
    <scope>MASS SPECTROMETRY</scope>
    <scope>AMIDATION AT HIS-70</scope>
    <scope>SYNTHESIS OF 46-70</scope>
    <source>
        <tissue>Venom</tissue>
    </source>
</reference>
<reference key="4">
    <citation type="journal article" date="2020" name="BMB Rep.">
        <title>Solution structure and functional analysis of HelaTx1: the first toxin member of the kappa-KTx5 subfamily.</title>
        <authorList>
            <person name="Park B.G."/>
            <person name="Peigneur S."/>
            <person name="Esaki N."/>
            <person name="Yamaguchi Y."/>
            <person name="Ryu J.H."/>
            <person name="Tytgat J."/>
            <person name="Kim J.I."/>
            <person name="Sato K."/>
        </authorList>
    </citation>
    <scope>STRUCTURE BY NMR OF 46-70</scope>
    <scope>SYNTHESIS OF 46-64</scope>
    <scope>MUTAGENESIS OF SER-46; LYS-48; LYS-49; GLY-53; SER-54; ARG-55; ARG-56; LYS-58; LYS-59 AND LYS-63</scope>
</reference>
<dbReference type="EMBL" id="JN872634">
    <property type="protein sequence ID" value="AFB73757.1"/>
    <property type="molecule type" value="mRNA"/>
</dbReference>
<dbReference type="PDB" id="2NDD">
    <property type="method" value="NMR"/>
    <property type="chains" value="A=46-70"/>
</dbReference>
<dbReference type="PDBsum" id="2NDD"/>
<dbReference type="BMRB" id="P0DJ41"/>
<dbReference type="SMR" id="P0DJ41"/>
<dbReference type="GO" id="GO:0005576">
    <property type="term" value="C:extracellular region"/>
    <property type="evidence" value="ECO:0007669"/>
    <property type="project" value="UniProtKB-SubCell"/>
</dbReference>
<dbReference type="GO" id="GO:0035792">
    <property type="term" value="C:host cell postsynaptic membrane"/>
    <property type="evidence" value="ECO:0007669"/>
    <property type="project" value="UniProtKB-KW"/>
</dbReference>
<dbReference type="GO" id="GO:0030550">
    <property type="term" value="F:acetylcholine receptor inhibitor activity"/>
    <property type="evidence" value="ECO:0007669"/>
    <property type="project" value="UniProtKB-KW"/>
</dbReference>
<dbReference type="GO" id="GO:0015459">
    <property type="term" value="F:potassium channel regulator activity"/>
    <property type="evidence" value="ECO:0007669"/>
    <property type="project" value="UniProtKB-KW"/>
</dbReference>
<dbReference type="GO" id="GO:0090729">
    <property type="term" value="F:toxin activity"/>
    <property type="evidence" value="ECO:0007669"/>
    <property type="project" value="UniProtKB-KW"/>
</dbReference>
<organism>
    <name type="scientific">Heterometrus laoticus</name>
    <name type="common">Thai giant scorpion</name>
    <dbReference type="NCBI Taxonomy" id="217256"/>
    <lineage>
        <taxon>Eukaryota</taxon>
        <taxon>Metazoa</taxon>
        <taxon>Ecdysozoa</taxon>
        <taxon>Arthropoda</taxon>
        <taxon>Chelicerata</taxon>
        <taxon>Arachnida</taxon>
        <taxon>Scorpiones</taxon>
        <taxon>Iurida</taxon>
        <taxon>Scorpionoidea</taxon>
        <taxon>Scorpionidae</taxon>
        <taxon>Heterometrinae</taxon>
        <taxon>Heterometrus</taxon>
    </lineage>
</organism>
<feature type="signal peptide" evidence="1">
    <location>
        <begin position="1"/>
        <end position="23"/>
    </location>
</feature>
<feature type="propeptide" id="PRO_0000416812" evidence="8">
    <location>
        <begin position="24"/>
        <end position="43"/>
    </location>
</feature>
<feature type="peptide" id="PRO_0000416813" description="Potassium channel toxin kappa-KTx 5.1" evidence="2">
    <location>
        <begin position="46"/>
        <end position="70"/>
    </location>
</feature>
<feature type="site" description="Important residue for potassium channel Kv1.1/KCNA1 inhibition" evidence="5">
    <location>
        <position position="48"/>
    </location>
</feature>
<feature type="site" description="Important residue for potassium channel Kv1.1/KCNA1 inhibition" evidence="5">
    <location>
        <position position="49"/>
    </location>
</feature>
<feature type="site" description="Important residue for potassium channel Kv1.1/KCNA1 inhibition" evidence="5">
    <location>
        <position position="53"/>
    </location>
</feature>
<feature type="site" description="Important residue for potassium channel Kv1.1/KCNA1 inhibition" evidence="5">
    <location>
        <position position="55"/>
    </location>
</feature>
<feature type="site" description="Important residue for potassium channel Kv1.1/KCNA1 inhibition" evidence="5">
    <location>
        <position position="56"/>
    </location>
</feature>
<feature type="site" description="Key residue for potassium channel Kv1.1/KCNA1 inhibition" evidence="5">
    <location>
        <position position="58"/>
    </location>
</feature>
<feature type="site" description="Key residue for potassium channel Kv1.1/KCNA1 inhibition" evidence="5">
    <location>
        <position position="59"/>
    </location>
</feature>
<feature type="site" description="Important residue for potassium channel Kv1.1/KCNA1 inhibition" evidence="5">
    <location>
        <position position="63"/>
    </location>
</feature>
<feature type="modified residue" description="Histidine amide" evidence="2">
    <location>
        <position position="70"/>
    </location>
</feature>
<feature type="disulfide bond" evidence="2 5 9">
    <location>
        <begin position="47"/>
        <end position="64"/>
    </location>
</feature>
<feature type="disulfide bond" evidence="2 5 9">
    <location>
        <begin position="51"/>
        <end position="60"/>
    </location>
</feature>
<feature type="mutagenesis site" description="Slight increase in inhibitory potency towards Kv1.1/KCNA1." evidence="5">
    <original>S</original>
    <variation>A</variation>
    <location>
        <position position="46"/>
    </location>
</feature>
<feature type="mutagenesis site" description="In HelaTx1(2-19): 6-fold decrease in inhibitory potency towards Kv1.1/KCNA1; when associated with 65-N--H-70 DEL. In [Ala10a]HelaTx1(2-19): 12-fold decrease in inhibitory potency towards Kv1.1/KCNA1; when associated with 55-R-A-55 and 65-N--H-70." evidence="3">
    <location>
        <position position="46"/>
    </location>
</feature>
<feature type="mutagenesis site" description="Moderate decrease in inhibitory potency towards Kv1.1/KCNA1." evidence="5">
    <original>K</original>
    <variation>A</variation>
    <location>
        <position position="48"/>
    </location>
</feature>
<feature type="mutagenesis site" description="Moderate decrease in inhibitory potency towards Kv1.1/KCNA1." evidence="5">
    <original>K</original>
    <variation>A</variation>
    <location>
        <position position="49"/>
    </location>
</feature>
<feature type="mutagenesis site" description="Moderate decrease in inhibitory potency towards Kv1.1/KCNA1." evidence="5">
    <original>G</original>
    <variation>A</variation>
    <location>
        <position position="53"/>
    </location>
</feature>
<feature type="mutagenesis site" description="Slight increase in inhibitory potency towards Kv1.1/KCNA1." evidence="5">
    <original>S</original>
    <variation>A</variation>
    <location>
        <position position="54"/>
    </location>
</feature>
<feature type="mutagenesis site" description="Moderate decrease in inhibitory potency towards Kv1.1/KCNA1." evidence="5">
    <original>R</original>
    <variation>A</variation>
    <location>
        <position position="55"/>
    </location>
</feature>
<feature type="mutagenesis site" description="In [Ala10a]HelaTx1(1-19): 8-fold decrease in inhibitory potency towards Kv1.1/KCNA1. In [Ala10a]HelaTx1(2-19): 12-fold decrease in inhibitory potency towards Kv1.1/KCNA1; when associated with S-46 DEL and 65-N--H-70.">
    <original>R</original>
    <variation>RA</variation>
    <location>
        <position position="55"/>
    </location>
</feature>
<feature type="mutagenesis site" description="Moderate decrease in inhibitory potency towards Kv1.1/KCNA1." evidence="5">
    <original>R</original>
    <variation>A</variation>
    <location>
        <position position="56"/>
    </location>
</feature>
<feature type="mutagenesis site" description="Important decrease in inhibitory potency towards Kv1.1/KCNA1." evidence="5">
    <original>K</original>
    <variation>A</variation>
    <location>
        <position position="58"/>
    </location>
</feature>
<feature type="mutagenesis site" description="Important decrease in inhibitory potency towards Kv1.1/KCNA1." evidence="5">
    <original>K</original>
    <variation>A</variation>
    <location>
        <position position="59"/>
    </location>
</feature>
<feature type="mutagenesis site" description="Moderate decrease in inhibitory potency towards Kv1.1/KCNA1." evidence="5">
    <original>K</original>
    <variation>A</variation>
    <location>
        <position position="63"/>
    </location>
</feature>
<feature type="mutagenesis site" description="In HelaTx1(1-19): 4-fold decrease in inhibitory potency towards Kv1.1/KCNA1. In HelaTx1(2-19): 6-fold decrease in inhibitory potency towards Kv1.1/KCNA1; when associated with S-46 DEL. In [Ala10a]HelaTx1(1-19): 8-fold decrease in inhibitory potency towards Kv1.1/KCNA1. In [Ala10a]HelaTx1(2-19): 12-fold decrease in inhibitory potency towards Kv1.1/KCNA1; when associated with S-46 DEL and 55-R-A-55." evidence="3">
    <location>
        <begin position="65"/>
        <end position="70"/>
    </location>
</feature>
<feature type="turn" evidence="10">
    <location>
        <begin position="49"/>
        <end position="51"/>
    </location>
</feature>
<feature type="helix" evidence="10">
    <location>
        <begin position="58"/>
        <end position="67"/>
    </location>
</feature>
<sequence length="72" mass="8380">MKLLPLLFVILIVCAILPDEASCDQSELERKEENFKDESREIVKRSCKKECSGSRRTKKCMQKCNREHGHGR</sequence>